<proteinExistence type="evidence at protein level"/>
<accession>P55874</accession>
<name>RL35_BACSU</name>
<protein>
    <recommendedName>
        <fullName evidence="2">Large ribosomal subunit protein bL35</fullName>
    </recommendedName>
    <alternativeName>
        <fullName evidence="5">50S ribosomal protein L35</fullName>
    </alternativeName>
</protein>
<feature type="initiator methionine" description="Removed" evidence="1">
    <location>
        <position position="1"/>
    </location>
</feature>
<feature type="chain" id="PRO_0000177326" description="Large ribosomal subunit protein bL35">
    <location>
        <begin position="2"/>
        <end position="66"/>
    </location>
</feature>
<feature type="region of interest" description="Disordered" evidence="3">
    <location>
        <begin position="1"/>
        <end position="48"/>
    </location>
</feature>
<feature type="compositionally biased region" description="Basic residues" evidence="3">
    <location>
        <begin position="1"/>
        <end position="26"/>
    </location>
</feature>
<feature type="helix" evidence="9">
    <location>
        <begin position="8"/>
        <end position="11"/>
    </location>
</feature>
<feature type="strand" evidence="8">
    <location>
        <begin position="18"/>
        <end position="20"/>
    </location>
</feature>
<feature type="strand" evidence="9">
    <location>
        <begin position="22"/>
        <end position="24"/>
    </location>
</feature>
<feature type="helix" evidence="9">
    <location>
        <begin position="33"/>
        <end position="35"/>
    </location>
</feature>
<feature type="helix" evidence="9">
    <location>
        <begin position="38"/>
        <end position="45"/>
    </location>
</feature>
<feature type="strand" evidence="8">
    <location>
        <begin position="46"/>
        <end position="49"/>
    </location>
</feature>
<feature type="helix" evidence="9">
    <location>
        <begin position="52"/>
        <end position="58"/>
    </location>
</feature>
<feature type="helix" evidence="9">
    <location>
        <begin position="59"/>
        <end position="62"/>
    </location>
</feature>
<dbReference type="EMBL" id="Z75208">
    <property type="protein sequence ID" value="CAA99617.1"/>
    <property type="molecule type" value="Genomic_DNA"/>
</dbReference>
<dbReference type="EMBL" id="AL009126">
    <property type="protein sequence ID" value="CAB14846.1"/>
    <property type="molecule type" value="Genomic_DNA"/>
</dbReference>
<dbReference type="PIR" id="C69698">
    <property type="entry name" value="C69698"/>
</dbReference>
<dbReference type="RefSeq" id="NP_390764.1">
    <property type="nucleotide sequence ID" value="NC_000964.3"/>
</dbReference>
<dbReference type="RefSeq" id="WP_003222418.1">
    <property type="nucleotide sequence ID" value="NZ_OZ025638.1"/>
</dbReference>
<dbReference type="PDB" id="3J9W">
    <property type="method" value="EM"/>
    <property type="resolution" value="3.90 A"/>
    <property type="chains" value="B7=1-66"/>
</dbReference>
<dbReference type="PDB" id="5NJT">
    <property type="method" value="EM"/>
    <property type="resolution" value="3.80 A"/>
    <property type="chains" value="s=2-65"/>
</dbReference>
<dbReference type="PDB" id="6HA1">
    <property type="method" value="EM"/>
    <property type="resolution" value="3.10 A"/>
    <property type="chains" value="3=1-66"/>
</dbReference>
<dbReference type="PDB" id="6HA8">
    <property type="method" value="EM"/>
    <property type="resolution" value="3.50 A"/>
    <property type="chains" value="3=1-66"/>
</dbReference>
<dbReference type="PDB" id="6HTQ">
    <property type="method" value="EM"/>
    <property type="resolution" value="4.50 A"/>
    <property type="chains" value="4=2-65"/>
</dbReference>
<dbReference type="PDB" id="6TNN">
    <property type="method" value="EM"/>
    <property type="resolution" value="3.07 A"/>
    <property type="chains" value="s=1-66"/>
</dbReference>
<dbReference type="PDB" id="6TPQ">
    <property type="method" value="EM"/>
    <property type="resolution" value="3.07 A"/>
    <property type="chains" value="s=1-66"/>
</dbReference>
<dbReference type="PDB" id="7AQC">
    <property type="method" value="EM"/>
    <property type="resolution" value="2.99 A"/>
    <property type="chains" value="e=1-66"/>
</dbReference>
<dbReference type="PDB" id="7AQD">
    <property type="method" value="EM"/>
    <property type="resolution" value="3.10 A"/>
    <property type="chains" value="e=1-66"/>
</dbReference>
<dbReference type="PDB" id="7AS8">
    <property type="method" value="EM"/>
    <property type="resolution" value="2.90 A"/>
    <property type="chains" value="i=1-66"/>
</dbReference>
<dbReference type="PDB" id="7AS9">
    <property type="method" value="EM"/>
    <property type="resolution" value="3.50 A"/>
    <property type="chains" value="i=1-66"/>
</dbReference>
<dbReference type="PDB" id="7O5B">
    <property type="method" value="EM"/>
    <property type="resolution" value="3.33 A"/>
    <property type="chains" value="3=1-66"/>
</dbReference>
<dbReference type="PDB" id="7OPE">
    <property type="method" value="EM"/>
    <property type="resolution" value="3.20 A"/>
    <property type="chains" value="i=1-66"/>
</dbReference>
<dbReference type="PDB" id="7QGU">
    <property type="method" value="EM"/>
    <property type="resolution" value="4.75 A"/>
    <property type="chains" value="e=1-66"/>
</dbReference>
<dbReference type="PDB" id="7QH4">
    <property type="method" value="EM"/>
    <property type="resolution" value="5.45 A"/>
    <property type="chains" value="e=1-66"/>
</dbReference>
<dbReference type="PDB" id="7QV1">
    <property type="method" value="EM"/>
    <property type="resolution" value="3.50 A"/>
    <property type="chains" value="3=1-66"/>
</dbReference>
<dbReference type="PDB" id="7QV2">
    <property type="method" value="EM"/>
    <property type="resolution" value="3.50 A"/>
    <property type="chains" value="3=1-66"/>
</dbReference>
<dbReference type="PDB" id="7QV3">
    <property type="method" value="EM"/>
    <property type="resolution" value="5.14 A"/>
    <property type="chains" value="3=1-66"/>
</dbReference>
<dbReference type="PDB" id="8BUU">
    <property type="method" value="EM"/>
    <property type="resolution" value="2.90 A"/>
    <property type="chains" value="3=1-66"/>
</dbReference>
<dbReference type="PDB" id="8QCQ">
    <property type="method" value="EM"/>
    <property type="resolution" value="2.30 A"/>
    <property type="chains" value="3=1-66"/>
</dbReference>
<dbReference type="PDB" id="8QPP">
    <property type="method" value="EM"/>
    <property type="resolution" value="3.40 A"/>
    <property type="chains" value="3=1-66"/>
</dbReference>
<dbReference type="PDB" id="8R55">
    <property type="method" value="EM"/>
    <property type="resolution" value="3.57 A"/>
    <property type="chains" value="3=1-66"/>
</dbReference>
<dbReference type="PDB" id="8S1P">
    <property type="method" value="EM"/>
    <property type="resolution" value="1.96 A"/>
    <property type="chains" value="3=1-66"/>
</dbReference>
<dbReference type="PDB" id="8S1U">
    <property type="method" value="EM"/>
    <property type="resolution" value="3.40 A"/>
    <property type="chains" value="3=1-66"/>
</dbReference>
<dbReference type="PDBsum" id="3J9W"/>
<dbReference type="PDBsum" id="5NJT"/>
<dbReference type="PDBsum" id="6HA1"/>
<dbReference type="PDBsum" id="6HA8"/>
<dbReference type="PDBsum" id="6HTQ"/>
<dbReference type="PDBsum" id="6TNN"/>
<dbReference type="PDBsum" id="6TPQ"/>
<dbReference type="PDBsum" id="7AQC"/>
<dbReference type="PDBsum" id="7AQD"/>
<dbReference type="PDBsum" id="7AS8"/>
<dbReference type="PDBsum" id="7AS9"/>
<dbReference type="PDBsum" id="7O5B"/>
<dbReference type="PDBsum" id="7OPE"/>
<dbReference type="PDBsum" id="7QGU"/>
<dbReference type="PDBsum" id="7QH4"/>
<dbReference type="PDBsum" id="7QV1"/>
<dbReference type="PDBsum" id="7QV2"/>
<dbReference type="PDBsum" id="7QV3"/>
<dbReference type="PDBsum" id="8BUU"/>
<dbReference type="PDBsum" id="8QCQ"/>
<dbReference type="PDBsum" id="8QPP"/>
<dbReference type="PDBsum" id="8R55"/>
<dbReference type="PDBsum" id="8S1P"/>
<dbReference type="PDBsum" id="8S1U"/>
<dbReference type="EMDB" id="EMD-0176"/>
<dbReference type="EMDB" id="EMD-0177"/>
<dbReference type="EMDB" id="EMD-0270"/>
<dbReference type="EMDB" id="EMD-10535"/>
<dbReference type="EMDB" id="EMD-10543"/>
<dbReference type="EMDB" id="EMD-11862"/>
<dbReference type="EMDB" id="EMD-11864"/>
<dbReference type="EMDB" id="EMD-11889"/>
<dbReference type="EMDB" id="EMD-11890"/>
<dbReference type="EMDB" id="EMD-12734"/>
<dbReference type="EMDB" id="EMD-13017"/>
<dbReference type="EMDB" id="EMD-14157"/>
<dbReference type="EMDB" id="EMD-14158"/>
<dbReference type="EMDB" id="EMD-14159"/>
<dbReference type="EMDB" id="EMD-16246"/>
<dbReference type="EMDB" id="EMD-18332"/>
<dbReference type="EMDB" id="EMD-19638"/>
<dbReference type="EMDB" id="EMD-19641"/>
<dbReference type="EMDB" id="EMD-3656"/>
<dbReference type="SMR" id="P55874"/>
<dbReference type="FunCoup" id="P55874">
    <property type="interactions" value="387"/>
</dbReference>
<dbReference type="STRING" id="224308.BSU28860"/>
<dbReference type="PaxDb" id="224308-BSU28860"/>
<dbReference type="EnsemblBacteria" id="CAB14846">
    <property type="protein sequence ID" value="CAB14846"/>
    <property type="gene ID" value="BSU_28860"/>
</dbReference>
<dbReference type="GeneID" id="86872596"/>
<dbReference type="GeneID" id="937421"/>
<dbReference type="KEGG" id="bsu:BSU28860"/>
<dbReference type="PATRIC" id="fig|224308.179.peg.3134"/>
<dbReference type="eggNOG" id="COG0291">
    <property type="taxonomic scope" value="Bacteria"/>
</dbReference>
<dbReference type="InParanoid" id="P55874"/>
<dbReference type="OrthoDB" id="47476at2"/>
<dbReference type="PhylomeDB" id="P55874"/>
<dbReference type="BioCyc" id="BSUB:BSU28860-MONOMER"/>
<dbReference type="PRO" id="PR:P55874"/>
<dbReference type="Proteomes" id="UP000001570">
    <property type="component" value="Chromosome"/>
</dbReference>
<dbReference type="GO" id="GO:0022625">
    <property type="term" value="C:cytosolic large ribosomal subunit"/>
    <property type="evidence" value="ECO:0000318"/>
    <property type="project" value="GO_Central"/>
</dbReference>
<dbReference type="GO" id="GO:0003735">
    <property type="term" value="F:structural constituent of ribosome"/>
    <property type="evidence" value="ECO:0000318"/>
    <property type="project" value="GO_Central"/>
</dbReference>
<dbReference type="GO" id="GO:0006412">
    <property type="term" value="P:translation"/>
    <property type="evidence" value="ECO:0007669"/>
    <property type="project" value="UniProtKB-UniRule"/>
</dbReference>
<dbReference type="FunFam" id="4.10.410.60:FF:000001">
    <property type="entry name" value="50S ribosomal protein L35"/>
    <property type="match status" value="1"/>
</dbReference>
<dbReference type="Gene3D" id="4.10.410.60">
    <property type="match status" value="1"/>
</dbReference>
<dbReference type="HAMAP" id="MF_00514">
    <property type="entry name" value="Ribosomal_bL35"/>
    <property type="match status" value="1"/>
</dbReference>
<dbReference type="InterPro" id="IPR001706">
    <property type="entry name" value="Ribosomal_bL35"/>
</dbReference>
<dbReference type="InterPro" id="IPR021137">
    <property type="entry name" value="Ribosomal_bL35-like"/>
</dbReference>
<dbReference type="InterPro" id="IPR018265">
    <property type="entry name" value="Ribosomal_bL35_CS"/>
</dbReference>
<dbReference type="InterPro" id="IPR037229">
    <property type="entry name" value="Ribosomal_bL35_sf"/>
</dbReference>
<dbReference type="NCBIfam" id="TIGR00001">
    <property type="entry name" value="rpmI_bact"/>
    <property type="match status" value="1"/>
</dbReference>
<dbReference type="PANTHER" id="PTHR33343">
    <property type="entry name" value="54S RIBOSOMAL PROTEIN BL35M"/>
    <property type="match status" value="1"/>
</dbReference>
<dbReference type="PANTHER" id="PTHR33343:SF1">
    <property type="entry name" value="LARGE RIBOSOMAL SUBUNIT PROTEIN BL35M"/>
    <property type="match status" value="1"/>
</dbReference>
<dbReference type="Pfam" id="PF01632">
    <property type="entry name" value="Ribosomal_L35p"/>
    <property type="match status" value="1"/>
</dbReference>
<dbReference type="PRINTS" id="PR00064">
    <property type="entry name" value="RIBOSOMALL35"/>
</dbReference>
<dbReference type="SUPFAM" id="SSF143034">
    <property type="entry name" value="L35p-like"/>
    <property type="match status" value="1"/>
</dbReference>
<dbReference type="PROSITE" id="PS00936">
    <property type="entry name" value="RIBOSOMAL_L35"/>
    <property type="match status" value="1"/>
</dbReference>
<organism>
    <name type="scientific">Bacillus subtilis (strain 168)</name>
    <dbReference type="NCBI Taxonomy" id="224308"/>
    <lineage>
        <taxon>Bacteria</taxon>
        <taxon>Bacillati</taxon>
        <taxon>Bacillota</taxon>
        <taxon>Bacilli</taxon>
        <taxon>Bacillales</taxon>
        <taxon>Bacillaceae</taxon>
        <taxon>Bacillus</taxon>
    </lineage>
</organism>
<gene>
    <name evidence="2" type="primary">rpmI</name>
    <name type="ordered locus">BSU28860</name>
</gene>
<comment type="subunit">
    <text evidence="4">Part of the 50S ribosomal subunit.</text>
</comment>
<comment type="similarity">
    <text evidence="2">Belongs to the bacterial ribosomal protein bL35 family.</text>
</comment>
<keyword id="KW-0002">3D-structure</keyword>
<keyword id="KW-1185">Reference proteome</keyword>
<keyword id="KW-0687">Ribonucleoprotein</keyword>
<keyword id="KW-0689">Ribosomal protein</keyword>
<evidence type="ECO:0000250" key="1"/>
<evidence type="ECO:0000255" key="2">
    <source>
        <dbReference type="HAMAP-Rule" id="MF_00514"/>
    </source>
</evidence>
<evidence type="ECO:0000256" key="3">
    <source>
        <dbReference type="SAM" id="MobiDB-lite"/>
    </source>
</evidence>
<evidence type="ECO:0000269" key="4">
    <source>
    </source>
</evidence>
<evidence type="ECO:0000305" key="5"/>
<evidence type="ECO:0007744" key="6">
    <source>
        <dbReference type="PDB" id="6HA1"/>
    </source>
</evidence>
<evidence type="ECO:0007744" key="7">
    <source>
        <dbReference type="PDB" id="6HA8"/>
    </source>
</evidence>
<evidence type="ECO:0007829" key="8">
    <source>
        <dbReference type="PDB" id="7AQC"/>
    </source>
</evidence>
<evidence type="ECO:0007829" key="9">
    <source>
        <dbReference type="PDB" id="8S1P"/>
    </source>
</evidence>
<sequence>MPKMKTHRGSAKRFKKTGSGKLKRSHAYTSHLFANKSQKQKRKLRKSAVVSAGDFKRIKQMLANIK</sequence>
<reference key="1">
    <citation type="journal article" date="1996" name="Microbiology">
        <title>The dnaB-pheA (256 degrees-240 degrees) region of the Bacillus subtilis chromosome containing genes responsible for stress responses, the utilization of plant cell walls and primary metabolism.</title>
        <authorList>
            <person name="Wipat A."/>
            <person name="Carter N."/>
            <person name="Brignell C.S."/>
            <person name="Guy J.B."/>
            <person name="Piper K."/>
            <person name="Sanders J."/>
            <person name="Emmerson P.T."/>
            <person name="Harwood C.R."/>
        </authorList>
    </citation>
    <scope>NUCLEOTIDE SEQUENCE [GENOMIC DNA]</scope>
    <source>
        <strain>168</strain>
    </source>
</reference>
<reference key="2">
    <citation type="journal article" date="1997" name="Nature">
        <title>The complete genome sequence of the Gram-positive bacterium Bacillus subtilis.</title>
        <authorList>
            <person name="Kunst F."/>
            <person name="Ogasawara N."/>
            <person name="Moszer I."/>
            <person name="Albertini A.M."/>
            <person name="Alloni G."/>
            <person name="Azevedo V."/>
            <person name="Bertero M.G."/>
            <person name="Bessieres P."/>
            <person name="Bolotin A."/>
            <person name="Borchert S."/>
            <person name="Borriss R."/>
            <person name="Boursier L."/>
            <person name="Brans A."/>
            <person name="Braun M."/>
            <person name="Brignell S.C."/>
            <person name="Bron S."/>
            <person name="Brouillet S."/>
            <person name="Bruschi C.V."/>
            <person name="Caldwell B."/>
            <person name="Capuano V."/>
            <person name="Carter N.M."/>
            <person name="Choi S.-K."/>
            <person name="Codani J.-J."/>
            <person name="Connerton I.F."/>
            <person name="Cummings N.J."/>
            <person name="Daniel R.A."/>
            <person name="Denizot F."/>
            <person name="Devine K.M."/>
            <person name="Duesterhoeft A."/>
            <person name="Ehrlich S.D."/>
            <person name="Emmerson P.T."/>
            <person name="Entian K.-D."/>
            <person name="Errington J."/>
            <person name="Fabret C."/>
            <person name="Ferrari E."/>
            <person name="Foulger D."/>
            <person name="Fritz C."/>
            <person name="Fujita M."/>
            <person name="Fujita Y."/>
            <person name="Fuma S."/>
            <person name="Galizzi A."/>
            <person name="Galleron N."/>
            <person name="Ghim S.-Y."/>
            <person name="Glaser P."/>
            <person name="Goffeau A."/>
            <person name="Golightly E.J."/>
            <person name="Grandi G."/>
            <person name="Guiseppi G."/>
            <person name="Guy B.J."/>
            <person name="Haga K."/>
            <person name="Haiech J."/>
            <person name="Harwood C.R."/>
            <person name="Henaut A."/>
            <person name="Hilbert H."/>
            <person name="Holsappel S."/>
            <person name="Hosono S."/>
            <person name="Hullo M.-F."/>
            <person name="Itaya M."/>
            <person name="Jones L.-M."/>
            <person name="Joris B."/>
            <person name="Karamata D."/>
            <person name="Kasahara Y."/>
            <person name="Klaerr-Blanchard M."/>
            <person name="Klein C."/>
            <person name="Kobayashi Y."/>
            <person name="Koetter P."/>
            <person name="Koningstein G."/>
            <person name="Krogh S."/>
            <person name="Kumano M."/>
            <person name="Kurita K."/>
            <person name="Lapidus A."/>
            <person name="Lardinois S."/>
            <person name="Lauber J."/>
            <person name="Lazarevic V."/>
            <person name="Lee S.-M."/>
            <person name="Levine A."/>
            <person name="Liu H."/>
            <person name="Masuda S."/>
            <person name="Mauel C."/>
            <person name="Medigue C."/>
            <person name="Medina N."/>
            <person name="Mellado R.P."/>
            <person name="Mizuno M."/>
            <person name="Moestl D."/>
            <person name="Nakai S."/>
            <person name="Noback M."/>
            <person name="Noone D."/>
            <person name="O'Reilly M."/>
            <person name="Ogawa K."/>
            <person name="Ogiwara A."/>
            <person name="Oudega B."/>
            <person name="Park S.-H."/>
            <person name="Parro V."/>
            <person name="Pohl T.M."/>
            <person name="Portetelle D."/>
            <person name="Porwollik S."/>
            <person name="Prescott A.M."/>
            <person name="Presecan E."/>
            <person name="Pujic P."/>
            <person name="Purnelle B."/>
            <person name="Rapoport G."/>
            <person name="Rey M."/>
            <person name="Reynolds S."/>
            <person name="Rieger M."/>
            <person name="Rivolta C."/>
            <person name="Rocha E."/>
            <person name="Roche B."/>
            <person name="Rose M."/>
            <person name="Sadaie Y."/>
            <person name="Sato T."/>
            <person name="Scanlan E."/>
            <person name="Schleich S."/>
            <person name="Schroeter R."/>
            <person name="Scoffone F."/>
            <person name="Sekiguchi J."/>
            <person name="Sekowska A."/>
            <person name="Seror S.J."/>
            <person name="Serror P."/>
            <person name="Shin B.-S."/>
            <person name="Soldo B."/>
            <person name="Sorokin A."/>
            <person name="Tacconi E."/>
            <person name="Takagi T."/>
            <person name="Takahashi H."/>
            <person name="Takemaru K."/>
            <person name="Takeuchi M."/>
            <person name="Tamakoshi A."/>
            <person name="Tanaka T."/>
            <person name="Terpstra P."/>
            <person name="Tognoni A."/>
            <person name="Tosato V."/>
            <person name="Uchiyama S."/>
            <person name="Vandenbol M."/>
            <person name="Vannier F."/>
            <person name="Vassarotti A."/>
            <person name="Viari A."/>
            <person name="Wambutt R."/>
            <person name="Wedler E."/>
            <person name="Wedler H."/>
            <person name="Weitzenegger T."/>
            <person name="Winters P."/>
            <person name="Wipat A."/>
            <person name="Yamamoto H."/>
            <person name="Yamane K."/>
            <person name="Yasumoto K."/>
            <person name="Yata K."/>
            <person name="Yoshida K."/>
            <person name="Yoshikawa H.-F."/>
            <person name="Zumstein E."/>
            <person name="Yoshikawa H."/>
            <person name="Danchin A."/>
        </authorList>
    </citation>
    <scope>NUCLEOTIDE SEQUENCE [LARGE SCALE GENOMIC DNA]</scope>
    <source>
        <strain>168</strain>
    </source>
</reference>
<reference evidence="6 7" key="3">
    <citation type="journal article" date="2018" name="Proc. Natl. Acad. Sci. U.S.A.">
        <title>Structural basis for antibiotic resistance mediated by the Bacillus subtilis ABCF ATPase VmlR.</title>
        <authorList>
            <person name="Crowe-McAuliffe C."/>
            <person name="Graf M."/>
            <person name="Huter P."/>
            <person name="Takada H."/>
            <person name="Abdelshahid M."/>
            <person name="Novacek J."/>
            <person name="Murina V."/>
            <person name="Atkinson G.C."/>
            <person name="Hauryliuk V."/>
            <person name="Wilson D.N."/>
        </authorList>
    </citation>
    <scope>STRUCTURE BY ELECTRON MICROSCOPY (3.10 ANGSTROMS) OF 1-66 WITH AND WITHOUT VIRGINIAMYCIN M</scope>
    <scope>SUBUNIT</scope>
</reference>